<dbReference type="EC" id="4.1.99.22" evidence="1"/>
<dbReference type="EMBL" id="AM933172">
    <property type="protein sequence ID" value="CAR32333.1"/>
    <property type="molecule type" value="Genomic_DNA"/>
</dbReference>
<dbReference type="RefSeq" id="WP_000168181.1">
    <property type="nucleotide sequence ID" value="NC_011294.1"/>
</dbReference>
<dbReference type="SMR" id="B5QX73"/>
<dbReference type="KEGG" id="set:SEN0748"/>
<dbReference type="HOGENOM" id="CLU_009273_0_1_6"/>
<dbReference type="UniPathway" id="UPA00344"/>
<dbReference type="Proteomes" id="UP000000613">
    <property type="component" value="Chromosome"/>
</dbReference>
<dbReference type="GO" id="GO:0051539">
    <property type="term" value="F:4 iron, 4 sulfur cluster binding"/>
    <property type="evidence" value="ECO:0007669"/>
    <property type="project" value="UniProtKB-UniRule"/>
</dbReference>
<dbReference type="GO" id="GO:0061799">
    <property type="term" value="F:cyclic pyranopterin monophosphate synthase activity"/>
    <property type="evidence" value="ECO:0007669"/>
    <property type="project" value="TreeGrafter"/>
</dbReference>
<dbReference type="GO" id="GO:0061798">
    <property type="term" value="F:GTP 3',8'-cyclase activity"/>
    <property type="evidence" value="ECO:0007669"/>
    <property type="project" value="UniProtKB-UniRule"/>
</dbReference>
<dbReference type="GO" id="GO:0005525">
    <property type="term" value="F:GTP binding"/>
    <property type="evidence" value="ECO:0007669"/>
    <property type="project" value="UniProtKB-UniRule"/>
</dbReference>
<dbReference type="GO" id="GO:0046872">
    <property type="term" value="F:metal ion binding"/>
    <property type="evidence" value="ECO:0007669"/>
    <property type="project" value="UniProtKB-KW"/>
</dbReference>
<dbReference type="GO" id="GO:1904047">
    <property type="term" value="F:S-adenosyl-L-methionine binding"/>
    <property type="evidence" value="ECO:0007669"/>
    <property type="project" value="UniProtKB-UniRule"/>
</dbReference>
<dbReference type="GO" id="GO:0006777">
    <property type="term" value="P:Mo-molybdopterin cofactor biosynthetic process"/>
    <property type="evidence" value="ECO:0007669"/>
    <property type="project" value="UniProtKB-UniRule"/>
</dbReference>
<dbReference type="CDD" id="cd01335">
    <property type="entry name" value="Radical_SAM"/>
    <property type="match status" value="1"/>
</dbReference>
<dbReference type="CDD" id="cd21117">
    <property type="entry name" value="Twitch_MoaA"/>
    <property type="match status" value="1"/>
</dbReference>
<dbReference type="FunFam" id="3.20.20.70:FF:000057">
    <property type="entry name" value="GTP 3',8-cyclase"/>
    <property type="match status" value="1"/>
</dbReference>
<dbReference type="Gene3D" id="3.20.20.70">
    <property type="entry name" value="Aldolase class I"/>
    <property type="match status" value="1"/>
</dbReference>
<dbReference type="HAMAP" id="MF_01225_B">
    <property type="entry name" value="MoaA_B"/>
    <property type="match status" value="1"/>
</dbReference>
<dbReference type="InterPro" id="IPR013785">
    <property type="entry name" value="Aldolase_TIM"/>
</dbReference>
<dbReference type="InterPro" id="IPR006638">
    <property type="entry name" value="Elp3/MiaA/NifB-like_rSAM"/>
</dbReference>
<dbReference type="InterPro" id="IPR013483">
    <property type="entry name" value="MoaA"/>
</dbReference>
<dbReference type="InterPro" id="IPR000385">
    <property type="entry name" value="MoaA_NifB_PqqE_Fe-S-bd_CS"/>
</dbReference>
<dbReference type="InterPro" id="IPR010505">
    <property type="entry name" value="MoaA_twitch"/>
</dbReference>
<dbReference type="InterPro" id="IPR050105">
    <property type="entry name" value="MoCo_biosynth_MoaA/MoaC"/>
</dbReference>
<dbReference type="InterPro" id="IPR007197">
    <property type="entry name" value="rSAM"/>
</dbReference>
<dbReference type="NCBIfam" id="TIGR02666">
    <property type="entry name" value="moaA"/>
    <property type="match status" value="1"/>
</dbReference>
<dbReference type="PANTHER" id="PTHR22960:SF28">
    <property type="entry name" value="GTP 3',8-CYCLASE"/>
    <property type="match status" value="1"/>
</dbReference>
<dbReference type="PANTHER" id="PTHR22960">
    <property type="entry name" value="MOLYBDOPTERIN COFACTOR SYNTHESIS PROTEIN A"/>
    <property type="match status" value="1"/>
</dbReference>
<dbReference type="Pfam" id="PF06463">
    <property type="entry name" value="Mob_synth_C"/>
    <property type="match status" value="1"/>
</dbReference>
<dbReference type="Pfam" id="PF04055">
    <property type="entry name" value="Radical_SAM"/>
    <property type="match status" value="1"/>
</dbReference>
<dbReference type="SFLD" id="SFLDG01383">
    <property type="entry name" value="cyclic_pyranopterin_phosphate"/>
    <property type="match status" value="1"/>
</dbReference>
<dbReference type="SFLD" id="SFLDG01216">
    <property type="entry name" value="thioether_bond_formation_requi"/>
    <property type="match status" value="1"/>
</dbReference>
<dbReference type="SMART" id="SM00729">
    <property type="entry name" value="Elp3"/>
    <property type="match status" value="1"/>
</dbReference>
<dbReference type="SUPFAM" id="SSF102114">
    <property type="entry name" value="Radical SAM enzymes"/>
    <property type="match status" value="1"/>
</dbReference>
<dbReference type="PROSITE" id="PS01305">
    <property type="entry name" value="MOAA_NIFB_PQQE"/>
    <property type="match status" value="1"/>
</dbReference>
<dbReference type="PROSITE" id="PS51918">
    <property type="entry name" value="RADICAL_SAM"/>
    <property type="match status" value="1"/>
</dbReference>
<sequence>MASQLTDAFARKFYYLRLSITDVCNFRCTYCLPDGYKPGGVTNNGFLTVDEIRRVTRAFASLGTEKVRLTGGEPSLRRDFTDIIAAVGENDAIRQIAVTTNGYRLARDAANWREAGLTGVNVSVDSLDARQFHAITGQDKFRQVMAGIDAAFDAGFEKVKVNTVLMRDVNHHQLDTFLAWIQPRPIQLRFIELMETGEGSDLFRKHHISGQVLRDELIKRGWIHQLRQRSDGPAQVFCHPDYAGEIGLIMPYEKDFCATCNRLRVSSVGKLHLCLFGDGGVSLRDLLQDDAQQYALEKRISDALREKKQTHFLHQSNTGITQNLSYIGG</sequence>
<protein>
    <recommendedName>
        <fullName evidence="1">GTP 3',8-cyclase</fullName>
        <ecNumber evidence="1">4.1.99.22</ecNumber>
    </recommendedName>
    <alternativeName>
        <fullName evidence="1">Molybdenum cofactor biosynthesis protein A</fullName>
    </alternativeName>
</protein>
<comment type="function">
    <text evidence="1">Catalyzes the cyclization of GTP to (8S)-3',8-cyclo-7,8-dihydroguanosine 5'-triphosphate.</text>
</comment>
<comment type="catalytic activity">
    <reaction evidence="1">
        <text>GTP + AH2 + S-adenosyl-L-methionine = (8S)-3',8-cyclo-7,8-dihydroguanosine 5'-triphosphate + 5'-deoxyadenosine + L-methionine + A + H(+)</text>
        <dbReference type="Rhea" id="RHEA:49576"/>
        <dbReference type="ChEBI" id="CHEBI:13193"/>
        <dbReference type="ChEBI" id="CHEBI:15378"/>
        <dbReference type="ChEBI" id="CHEBI:17319"/>
        <dbReference type="ChEBI" id="CHEBI:17499"/>
        <dbReference type="ChEBI" id="CHEBI:37565"/>
        <dbReference type="ChEBI" id="CHEBI:57844"/>
        <dbReference type="ChEBI" id="CHEBI:59789"/>
        <dbReference type="ChEBI" id="CHEBI:131766"/>
        <dbReference type="EC" id="4.1.99.22"/>
    </reaction>
</comment>
<comment type="cofactor">
    <cofactor evidence="1">
        <name>[4Fe-4S] cluster</name>
        <dbReference type="ChEBI" id="CHEBI:49883"/>
    </cofactor>
    <text evidence="1">Binds 2 [4Fe-4S] clusters. Binds 1 [4Fe-4S] cluster coordinated with 3 cysteines and an exchangeable S-adenosyl-L-methionine and 1 [4Fe-4S] cluster coordinated with 3 cysteines and the GTP-derived substrate.</text>
</comment>
<comment type="pathway">
    <text evidence="1">Cofactor biosynthesis; molybdopterin biosynthesis.</text>
</comment>
<comment type="subunit">
    <text evidence="1">Monomer and homodimer.</text>
</comment>
<comment type="similarity">
    <text evidence="1">Belongs to the radical SAM superfamily. MoaA family.</text>
</comment>
<name>MOAA_SALEP</name>
<proteinExistence type="inferred from homology"/>
<evidence type="ECO:0000255" key="1">
    <source>
        <dbReference type="HAMAP-Rule" id="MF_01225"/>
    </source>
</evidence>
<evidence type="ECO:0000255" key="2">
    <source>
        <dbReference type="PROSITE-ProRule" id="PRU01266"/>
    </source>
</evidence>
<keyword id="KW-0004">4Fe-4S</keyword>
<keyword id="KW-0342">GTP-binding</keyword>
<keyword id="KW-0408">Iron</keyword>
<keyword id="KW-0411">Iron-sulfur</keyword>
<keyword id="KW-0456">Lyase</keyword>
<keyword id="KW-0479">Metal-binding</keyword>
<keyword id="KW-0501">Molybdenum cofactor biosynthesis</keyword>
<keyword id="KW-0547">Nucleotide-binding</keyword>
<keyword id="KW-0949">S-adenosyl-L-methionine</keyword>
<feature type="chain" id="PRO_1000139341" description="GTP 3',8-cyclase">
    <location>
        <begin position="1"/>
        <end position="329"/>
    </location>
</feature>
<feature type="domain" description="Radical SAM core" evidence="2">
    <location>
        <begin position="8"/>
        <end position="234"/>
    </location>
</feature>
<feature type="binding site" evidence="1">
    <location>
        <position position="17"/>
    </location>
    <ligand>
        <name>GTP</name>
        <dbReference type="ChEBI" id="CHEBI:37565"/>
    </ligand>
</feature>
<feature type="binding site" evidence="1">
    <location>
        <position position="24"/>
    </location>
    <ligand>
        <name>[4Fe-4S] cluster</name>
        <dbReference type="ChEBI" id="CHEBI:49883"/>
        <label>1</label>
        <note>4Fe-4S-S-AdoMet</note>
    </ligand>
</feature>
<feature type="binding site" evidence="1">
    <location>
        <position position="28"/>
    </location>
    <ligand>
        <name>[4Fe-4S] cluster</name>
        <dbReference type="ChEBI" id="CHEBI:49883"/>
        <label>1</label>
        <note>4Fe-4S-S-AdoMet</note>
    </ligand>
</feature>
<feature type="binding site" evidence="1">
    <location>
        <position position="30"/>
    </location>
    <ligand>
        <name>S-adenosyl-L-methionine</name>
        <dbReference type="ChEBI" id="CHEBI:59789"/>
    </ligand>
</feature>
<feature type="binding site" evidence="1">
    <location>
        <position position="31"/>
    </location>
    <ligand>
        <name>[4Fe-4S] cluster</name>
        <dbReference type="ChEBI" id="CHEBI:49883"/>
        <label>1</label>
        <note>4Fe-4S-S-AdoMet</note>
    </ligand>
</feature>
<feature type="binding site" evidence="1">
    <location>
        <position position="68"/>
    </location>
    <ligand>
        <name>GTP</name>
        <dbReference type="ChEBI" id="CHEBI:37565"/>
    </ligand>
</feature>
<feature type="binding site" evidence="1">
    <location>
        <position position="72"/>
    </location>
    <ligand>
        <name>S-adenosyl-L-methionine</name>
        <dbReference type="ChEBI" id="CHEBI:59789"/>
    </ligand>
</feature>
<feature type="binding site" evidence="1">
    <location>
        <position position="99"/>
    </location>
    <ligand>
        <name>GTP</name>
        <dbReference type="ChEBI" id="CHEBI:37565"/>
    </ligand>
</feature>
<feature type="binding site" evidence="1">
    <location>
        <position position="123"/>
    </location>
    <ligand>
        <name>S-adenosyl-L-methionine</name>
        <dbReference type="ChEBI" id="CHEBI:59789"/>
    </ligand>
</feature>
<feature type="binding site" evidence="1">
    <location>
        <position position="160"/>
    </location>
    <ligand>
        <name>GTP</name>
        <dbReference type="ChEBI" id="CHEBI:37565"/>
    </ligand>
</feature>
<feature type="binding site" evidence="1">
    <location>
        <position position="194"/>
    </location>
    <ligand>
        <name>S-adenosyl-L-methionine</name>
        <dbReference type="ChEBI" id="CHEBI:59789"/>
    </ligand>
</feature>
<feature type="binding site" evidence="1">
    <location>
        <position position="257"/>
    </location>
    <ligand>
        <name>[4Fe-4S] cluster</name>
        <dbReference type="ChEBI" id="CHEBI:49883"/>
        <label>2</label>
        <note>4Fe-4S-substrate</note>
    </ligand>
</feature>
<feature type="binding site" evidence="1">
    <location>
        <position position="260"/>
    </location>
    <ligand>
        <name>[4Fe-4S] cluster</name>
        <dbReference type="ChEBI" id="CHEBI:49883"/>
        <label>2</label>
        <note>4Fe-4S-substrate</note>
    </ligand>
</feature>
<feature type="binding site" evidence="1">
    <location>
        <begin position="262"/>
        <end position="264"/>
    </location>
    <ligand>
        <name>GTP</name>
        <dbReference type="ChEBI" id="CHEBI:37565"/>
    </ligand>
</feature>
<feature type="binding site" evidence="1">
    <location>
        <position position="274"/>
    </location>
    <ligand>
        <name>[4Fe-4S] cluster</name>
        <dbReference type="ChEBI" id="CHEBI:49883"/>
        <label>2</label>
        <note>4Fe-4S-substrate</note>
    </ligand>
</feature>
<accession>B5QX73</accession>
<gene>
    <name evidence="1" type="primary">moaA</name>
    <name type="ordered locus">SEN0748</name>
</gene>
<organism>
    <name type="scientific">Salmonella enteritidis PT4 (strain P125109)</name>
    <dbReference type="NCBI Taxonomy" id="550537"/>
    <lineage>
        <taxon>Bacteria</taxon>
        <taxon>Pseudomonadati</taxon>
        <taxon>Pseudomonadota</taxon>
        <taxon>Gammaproteobacteria</taxon>
        <taxon>Enterobacterales</taxon>
        <taxon>Enterobacteriaceae</taxon>
        <taxon>Salmonella</taxon>
    </lineage>
</organism>
<reference key="1">
    <citation type="journal article" date="2008" name="Genome Res.">
        <title>Comparative genome analysis of Salmonella enteritidis PT4 and Salmonella gallinarum 287/91 provides insights into evolutionary and host adaptation pathways.</title>
        <authorList>
            <person name="Thomson N.R."/>
            <person name="Clayton D.J."/>
            <person name="Windhorst D."/>
            <person name="Vernikos G."/>
            <person name="Davidson S."/>
            <person name="Churcher C."/>
            <person name="Quail M.A."/>
            <person name="Stevens M."/>
            <person name="Jones M.A."/>
            <person name="Watson M."/>
            <person name="Barron A."/>
            <person name="Layton A."/>
            <person name="Pickard D."/>
            <person name="Kingsley R.A."/>
            <person name="Bignell A."/>
            <person name="Clark L."/>
            <person name="Harris B."/>
            <person name="Ormond D."/>
            <person name="Abdellah Z."/>
            <person name="Brooks K."/>
            <person name="Cherevach I."/>
            <person name="Chillingworth T."/>
            <person name="Woodward J."/>
            <person name="Norberczak H."/>
            <person name="Lord A."/>
            <person name="Arrowsmith C."/>
            <person name="Jagels K."/>
            <person name="Moule S."/>
            <person name="Mungall K."/>
            <person name="Saunders M."/>
            <person name="Whitehead S."/>
            <person name="Chabalgoity J.A."/>
            <person name="Maskell D."/>
            <person name="Humphreys T."/>
            <person name="Roberts M."/>
            <person name="Barrow P.A."/>
            <person name="Dougan G."/>
            <person name="Parkhill J."/>
        </authorList>
    </citation>
    <scope>NUCLEOTIDE SEQUENCE [LARGE SCALE GENOMIC DNA]</scope>
    <source>
        <strain>P125109</strain>
    </source>
</reference>